<dbReference type="EMBL" id="AE000520">
    <property type="protein sequence ID" value="AAC65493.1"/>
    <property type="molecule type" value="Genomic_DNA"/>
</dbReference>
<dbReference type="PIR" id="D71317">
    <property type="entry name" value="D71317"/>
</dbReference>
<dbReference type="IntAct" id="O83517">
    <property type="interactions" value="5"/>
</dbReference>
<dbReference type="EnsemblBacteria" id="AAC65493">
    <property type="protein sequence ID" value="AAC65493"/>
    <property type="gene ID" value="TP_0504"/>
</dbReference>
<dbReference type="KEGG" id="tpa:TP_0504"/>
<dbReference type="HOGENOM" id="CLU_3190275_0_0_12"/>
<dbReference type="Proteomes" id="UP000000811">
    <property type="component" value="Chromosome"/>
</dbReference>
<organism>
    <name type="scientific">Treponema pallidum (strain Nichols)</name>
    <dbReference type="NCBI Taxonomy" id="243276"/>
    <lineage>
        <taxon>Bacteria</taxon>
        <taxon>Pseudomonadati</taxon>
        <taxon>Spirochaetota</taxon>
        <taxon>Spirochaetia</taxon>
        <taxon>Spirochaetales</taxon>
        <taxon>Treponemataceae</taxon>
        <taxon>Treponema</taxon>
    </lineage>
</organism>
<gene>
    <name type="ordered locus">TP_0504</name>
</gene>
<feature type="chain" id="PRO_0000202268" description="Uncharacterized protein TP_0504">
    <location>
        <begin position="1"/>
        <end position="46"/>
    </location>
</feature>
<feature type="region of interest" description="Disordered" evidence="1">
    <location>
        <begin position="1"/>
        <end position="46"/>
    </location>
</feature>
<reference key="1">
    <citation type="journal article" date="1998" name="Science">
        <title>Complete genome sequence of Treponema pallidum, the syphilis spirochete.</title>
        <authorList>
            <person name="Fraser C.M."/>
            <person name="Norris S.J."/>
            <person name="Weinstock G.M."/>
            <person name="White O."/>
            <person name="Sutton G.G."/>
            <person name="Dodson R.J."/>
            <person name="Gwinn M.L."/>
            <person name="Hickey E.K."/>
            <person name="Clayton R.A."/>
            <person name="Ketchum K.A."/>
            <person name="Sodergren E."/>
            <person name="Hardham J.M."/>
            <person name="McLeod M.P."/>
            <person name="Salzberg S.L."/>
            <person name="Peterson J.D."/>
            <person name="Khalak H.G."/>
            <person name="Richardson D.L."/>
            <person name="Howell J.K."/>
            <person name="Chidambaram M."/>
            <person name="Utterback T.R."/>
            <person name="McDonald L.A."/>
            <person name="Artiach P."/>
            <person name="Bowman C."/>
            <person name="Cotton M.D."/>
            <person name="Fujii C."/>
            <person name="Garland S.A."/>
            <person name="Hatch B."/>
            <person name="Horst K."/>
            <person name="Roberts K.M."/>
            <person name="Sandusky M."/>
            <person name="Weidman J.F."/>
            <person name="Smith H.O."/>
            <person name="Venter J.C."/>
        </authorList>
    </citation>
    <scope>NUCLEOTIDE SEQUENCE [LARGE SCALE GENOMIC DNA]</scope>
    <source>
        <strain>Nichols</strain>
    </source>
</reference>
<name>Y504_TREPA</name>
<evidence type="ECO:0000256" key="1">
    <source>
        <dbReference type="SAM" id="MobiDB-lite"/>
    </source>
</evidence>
<accession>O83517</accession>
<keyword id="KW-1185">Reference proteome</keyword>
<protein>
    <recommendedName>
        <fullName>Uncharacterized protein TP_0504</fullName>
    </recommendedName>
</protein>
<proteinExistence type="predicted"/>
<sequence length="46" mass="5038">MEVTPLETGRARSHQKASTAAQPHAADEKMTGSTARRYLSQDHQSV</sequence>